<dbReference type="EC" id="2.3.3.9" evidence="2"/>
<dbReference type="EMBL" id="AE005674">
    <property type="protein sequence ID" value="AAN44496.1"/>
    <property type="molecule type" value="Genomic_DNA"/>
</dbReference>
<dbReference type="EMBL" id="AE014073">
    <property type="protein sequence ID" value="AAP18307.1"/>
    <property type="molecule type" value="Genomic_DNA"/>
</dbReference>
<dbReference type="RefSeq" id="NP_708789.1">
    <property type="nucleotide sequence ID" value="NC_004337.2"/>
</dbReference>
<dbReference type="RefSeq" id="WP_000084122.1">
    <property type="nucleotide sequence ID" value="NZ_WPGW01000053.1"/>
</dbReference>
<dbReference type="BMRB" id="P59663"/>
<dbReference type="SMR" id="P59663"/>
<dbReference type="STRING" id="198214.SF3015"/>
<dbReference type="PaxDb" id="198214-SF3015"/>
<dbReference type="GeneID" id="1026622"/>
<dbReference type="KEGG" id="sfl:SF3015"/>
<dbReference type="KEGG" id="sfx:S3216"/>
<dbReference type="PATRIC" id="fig|198214.7.peg.3586"/>
<dbReference type="HOGENOM" id="CLU_028446_1_0_6"/>
<dbReference type="UniPathway" id="UPA00703">
    <property type="reaction ID" value="UER00720"/>
</dbReference>
<dbReference type="Proteomes" id="UP000001006">
    <property type="component" value="Chromosome"/>
</dbReference>
<dbReference type="Proteomes" id="UP000002673">
    <property type="component" value="Chromosome"/>
</dbReference>
<dbReference type="GO" id="GO:0005829">
    <property type="term" value="C:cytosol"/>
    <property type="evidence" value="ECO:0007669"/>
    <property type="project" value="TreeGrafter"/>
</dbReference>
<dbReference type="GO" id="GO:0000287">
    <property type="term" value="F:magnesium ion binding"/>
    <property type="evidence" value="ECO:0007669"/>
    <property type="project" value="TreeGrafter"/>
</dbReference>
<dbReference type="GO" id="GO:0004474">
    <property type="term" value="F:malate synthase activity"/>
    <property type="evidence" value="ECO:0007669"/>
    <property type="project" value="UniProtKB-UniRule"/>
</dbReference>
<dbReference type="GO" id="GO:0009436">
    <property type="term" value="P:glyoxylate catabolic process"/>
    <property type="evidence" value="ECO:0007669"/>
    <property type="project" value="TreeGrafter"/>
</dbReference>
<dbReference type="GO" id="GO:0006097">
    <property type="term" value="P:glyoxylate cycle"/>
    <property type="evidence" value="ECO:0007669"/>
    <property type="project" value="UniProtKB-UniRule"/>
</dbReference>
<dbReference type="GO" id="GO:0006099">
    <property type="term" value="P:tricarboxylic acid cycle"/>
    <property type="evidence" value="ECO:0007669"/>
    <property type="project" value="UniProtKB-KW"/>
</dbReference>
<dbReference type="CDD" id="cd00728">
    <property type="entry name" value="malate_synt_G"/>
    <property type="match status" value="1"/>
</dbReference>
<dbReference type="FunFam" id="1.20.1220.12:FF:000002">
    <property type="entry name" value="Malate synthase G"/>
    <property type="match status" value="1"/>
</dbReference>
<dbReference type="FunFam" id="3.20.20.360:FF:000002">
    <property type="entry name" value="Malate synthase G"/>
    <property type="match status" value="1"/>
</dbReference>
<dbReference type="Gene3D" id="3.20.20.360">
    <property type="entry name" value="Malate synthase, domain 3"/>
    <property type="match status" value="2"/>
</dbReference>
<dbReference type="Gene3D" id="1.20.1220.12">
    <property type="entry name" value="Malate synthase, domain III"/>
    <property type="match status" value="1"/>
</dbReference>
<dbReference type="HAMAP" id="MF_00641">
    <property type="entry name" value="Malate_synth_G"/>
    <property type="match status" value="1"/>
</dbReference>
<dbReference type="InterPro" id="IPR044856">
    <property type="entry name" value="Malate_synth_C_sf"/>
</dbReference>
<dbReference type="InterPro" id="IPR011076">
    <property type="entry name" value="Malate_synth_sf"/>
</dbReference>
<dbReference type="InterPro" id="IPR001465">
    <property type="entry name" value="Malate_synthase_TIM"/>
</dbReference>
<dbReference type="InterPro" id="IPR006253">
    <property type="entry name" value="Malate_synthG"/>
</dbReference>
<dbReference type="InterPro" id="IPR048355">
    <property type="entry name" value="MS_C"/>
</dbReference>
<dbReference type="InterPro" id="IPR048356">
    <property type="entry name" value="MS_N"/>
</dbReference>
<dbReference type="InterPro" id="IPR046363">
    <property type="entry name" value="MS_N_TIM-barrel_dom"/>
</dbReference>
<dbReference type="InterPro" id="IPR048357">
    <property type="entry name" value="MSG_insertion"/>
</dbReference>
<dbReference type="NCBIfam" id="TIGR01345">
    <property type="entry name" value="malate_syn_G"/>
    <property type="match status" value="1"/>
</dbReference>
<dbReference type="NCBIfam" id="NF002825">
    <property type="entry name" value="PRK02999.1"/>
    <property type="match status" value="1"/>
</dbReference>
<dbReference type="PANTHER" id="PTHR42739">
    <property type="entry name" value="MALATE SYNTHASE G"/>
    <property type="match status" value="1"/>
</dbReference>
<dbReference type="PANTHER" id="PTHR42739:SF1">
    <property type="entry name" value="MALATE SYNTHASE G"/>
    <property type="match status" value="1"/>
</dbReference>
<dbReference type="Pfam" id="PF20659">
    <property type="entry name" value="MS_C"/>
    <property type="match status" value="1"/>
</dbReference>
<dbReference type="Pfam" id="PF20656">
    <property type="entry name" value="MS_N"/>
    <property type="match status" value="1"/>
</dbReference>
<dbReference type="Pfam" id="PF01274">
    <property type="entry name" value="MS_TIM-barrel"/>
    <property type="match status" value="1"/>
</dbReference>
<dbReference type="Pfam" id="PF20658">
    <property type="entry name" value="MSG_insertion"/>
    <property type="match status" value="1"/>
</dbReference>
<dbReference type="SUPFAM" id="SSF51645">
    <property type="entry name" value="Malate synthase G"/>
    <property type="match status" value="1"/>
</dbReference>
<feature type="initiator methionine" description="Removed" evidence="1">
    <location>
        <position position="1"/>
    </location>
</feature>
<feature type="chain" id="PRO_0000166900" description="Malate synthase G">
    <location>
        <begin position="2"/>
        <end position="723"/>
    </location>
</feature>
<feature type="active site" description="Proton acceptor" evidence="2">
    <location>
        <position position="338"/>
    </location>
</feature>
<feature type="active site" description="Proton donor" evidence="2">
    <location>
        <position position="631"/>
    </location>
</feature>
<feature type="binding site" evidence="2">
    <location>
        <position position="118"/>
    </location>
    <ligand>
        <name>acetyl-CoA</name>
        <dbReference type="ChEBI" id="CHEBI:57288"/>
    </ligand>
</feature>
<feature type="binding site" evidence="2">
    <location>
        <begin position="125"/>
        <end position="126"/>
    </location>
    <ligand>
        <name>acetyl-CoA</name>
        <dbReference type="ChEBI" id="CHEBI:57288"/>
    </ligand>
</feature>
<feature type="binding site" evidence="2">
    <location>
        <position position="274"/>
    </location>
    <ligand>
        <name>acetyl-CoA</name>
        <dbReference type="ChEBI" id="CHEBI:57288"/>
    </ligand>
</feature>
<feature type="binding site" evidence="2">
    <location>
        <position position="311"/>
    </location>
    <ligand>
        <name>acetyl-CoA</name>
        <dbReference type="ChEBI" id="CHEBI:57288"/>
    </ligand>
</feature>
<feature type="binding site" evidence="2">
    <location>
        <position position="338"/>
    </location>
    <ligand>
        <name>glyoxylate</name>
        <dbReference type="ChEBI" id="CHEBI:36655"/>
    </ligand>
</feature>
<feature type="binding site" evidence="2">
    <location>
        <position position="427"/>
    </location>
    <ligand>
        <name>glyoxylate</name>
        <dbReference type="ChEBI" id="CHEBI:36655"/>
    </ligand>
</feature>
<feature type="binding site" evidence="2">
    <location>
        <position position="427"/>
    </location>
    <ligand>
        <name>Mg(2+)</name>
        <dbReference type="ChEBI" id="CHEBI:18420"/>
    </ligand>
</feature>
<feature type="binding site" evidence="2">
    <location>
        <begin position="452"/>
        <end position="455"/>
    </location>
    <ligand>
        <name>glyoxylate</name>
        <dbReference type="ChEBI" id="CHEBI:36655"/>
    </ligand>
</feature>
<feature type="binding site" evidence="2">
    <location>
        <position position="455"/>
    </location>
    <ligand>
        <name>Mg(2+)</name>
        <dbReference type="ChEBI" id="CHEBI:18420"/>
    </ligand>
</feature>
<feature type="binding site" evidence="2">
    <location>
        <position position="536"/>
    </location>
    <ligand>
        <name>acetyl-CoA</name>
        <dbReference type="ChEBI" id="CHEBI:57288"/>
    </ligand>
</feature>
<feature type="modified residue" description="Cysteine sulfenic acid (-SOH)" evidence="2">
    <location>
        <position position="617"/>
    </location>
</feature>
<feature type="modified residue" description="Cysteine sulfenic acid (-SOH)" evidence="2">
    <location>
        <position position="688"/>
    </location>
</feature>
<comment type="function">
    <text evidence="2">Involved in the glycolate utilization. Catalyzes the condensation and subsequent hydrolysis of acetyl-coenzyme A (acetyl-CoA) and glyoxylate to form malate and CoA.</text>
</comment>
<comment type="catalytic activity">
    <reaction evidence="2">
        <text>glyoxylate + acetyl-CoA + H2O = (S)-malate + CoA + H(+)</text>
        <dbReference type="Rhea" id="RHEA:18181"/>
        <dbReference type="ChEBI" id="CHEBI:15377"/>
        <dbReference type="ChEBI" id="CHEBI:15378"/>
        <dbReference type="ChEBI" id="CHEBI:15589"/>
        <dbReference type="ChEBI" id="CHEBI:36655"/>
        <dbReference type="ChEBI" id="CHEBI:57287"/>
        <dbReference type="ChEBI" id="CHEBI:57288"/>
        <dbReference type="EC" id="2.3.3.9"/>
    </reaction>
</comment>
<comment type="cofactor">
    <cofactor evidence="2">
        <name>Mg(2+)</name>
        <dbReference type="ChEBI" id="CHEBI:18420"/>
    </cofactor>
</comment>
<comment type="pathway">
    <text evidence="2">Carbohydrate metabolism; glyoxylate cycle; (S)-malate from isocitrate: step 2/2.</text>
</comment>
<comment type="subunit">
    <text evidence="2">Monomer.</text>
</comment>
<comment type="subcellular location">
    <subcellularLocation>
        <location evidence="2">Cytoplasm</location>
    </subcellularLocation>
</comment>
<comment type="similarity">
    <text evidence="2">Belongs to the malate synthase family. GlcB subfamily.</text>
</comment>
<reference key="1">
    <citation type="journal article" date="2002" name="Nucleic Acids Res.">
        <title>Genome sequence of Shigella flexneri 2a: insights into pathogenicity through comparison with genomes of Escherichia coli K12 and O157.</title>
        <authorList>
            <person name="Jin Q."/>
            <person name="Yuan Z."/>
            <person name="Xu J."/>
            <person name="Wang Y."/>
            <person name="Shen Y."/>
            <person name="Lu W."/>
            <person name="Wang J."/>
            <person name="Liu H."/>
            <person name="Yang J."/>
            <person name="Yang F."/>
            <person name="Zhang X."/>
            <person name="Zhang J."/>
            <person name="Yang G."/>
            <person name="Wu H."/>
            <person name="Qu D."/>
            <person name="Dong J."/>
            <person name="Sun L."/>
            <person name="Xue Y."/>
            <person name="Zhao A."/>
            <person name="Gao Y."/>
            <person name="Zhu J."/>
            <person name="Kan B."/>
            <person name="Ding K."/>
            <person name="Chen S."/>
            <person name="Cheng H."/>
            <person name="Yao Z."/>
            <person name="He B."/>
            <person name="Chen R."/>
            <person name="Ma D."/>
            <person name="Qiang B."/>
            <person name="Wen Y."/>
            <person name="Hou Y."/>
            <person name="Yu J."/>
        </authorList>
    </citation>
    <scope>NUCLEOTIDE SEQUENCE [LARGE SCALE GENOMIC DNA]</scope>
    <source>
        <strain>301 / Serotype 2a</strain>
    </source>
</reference>
<reference key="2">
    <citation type="journal article" date="2003" name="Infect. Immun.">
        <title>Complete genome sequence and comparative genomics of Shigella flexneri serotype 2a strain 2457T.</title>
        <authorList>
            <person name="Wei J."/>
            <person name="Goldberg M.B."/>
            <person name="Burland V."/>
            <person name="Venkatesan M.M."/>
            <person name="Deng W."/>
            <person name="Fournier G."/>
            <person name="Mayhew G.F."/>
            <person name="Plunkett G. III"/>
            <person name="Rose D.J."/>
            <person name="Darling A."/>
            <person name="Mau B."/>
            <person name="Perna N.T."/>
            <person name="Payne S.M."/>
            <person name="Runyen-Janecky L.J."/>
            <person name="Zhou S."/>
            <person name="Schwartz D.C."/>
            <person name="Blattner F.R."/>
        </authorList>
    </citation>
    <scope>NUCLEOTIDE SEQUENCE [LARGE SCALE GENOMIC DNA]</scope>
    <source>
        <strain>ATCC 700930 / 2457T / Serotype 2a</strain>
    </source>
</reference>
<accession>P59663</accession>
<keyword id="KW-0963">Cytoplasm</keyword>
<keyword id="KW-0329">Glyoxylate bypass</keyword>
<keyword id="KW-0460">Magnesium</keyword>
<keyword id="KW-0479">Metal-binding</keyword>
<keyword id="KW-0558">Oxidation</keyword>
<keyword id="KW-1185">Reference proteome</keyword>
<keyword id="KW-0808">Transferase</keyword>
<keyword id="KW-0816">Tricarboxylic acid cycle</keyword>
<sequence>MSQTITQGRLRIDANFKRFVDGEVLPGVELDAAAFWHNVDEIVHDLAPENRQLLAERDRIQAALDEWHRSNPGPVKDKAAYKSFLRELGYLVPQPERVTVETTGIDSEITSQAGPQLVVPAMNARYALNAANARWGSLYDALYGSDIIPQEGAMVSGYDPQRGEQVIAWVRRFLDESLPLENGSYQDVVAFKVVDKQLRIQLKNGKETTLRTPAQFVGYRGDAAAPTCILLKNNGLHIELQIDANGRIGKDDPAHINDVIVEAAISTILDCEDSVAAVDAEDKILLYRNLLGLMQGTLQEKMEKNGRQIVRKLNDDRQYTAADGSEISLHGRSLLFIRNVGHLMTIPVIWDSEGNEIPEGILDGVMTGAIALYDLKVQKNSRTGSVYIVKPKMHGPQEVAFANKLFTRIETMLGMAPNTLKMGIMDEERRTSLNLRSCIAQARNRVAFINTGFLDRTGDEMHSVMEAGPMLRKNQMKSTPWIKAYERNNVLSGLFCGLRGKAQIGKGMWAMPDLMADMYSQKGDQLRAGANTAWVPSPTAATLHALHYHHTNVQSVQANIAQTEFSAEFEPLLDDLLTIPVAENANWSAQEIQQELDNNVQGILGYVVRWVEQGIGCSKVPDIHNVALMEDRATLRISSQHIANWLRHGILTKEQVQASLENMAKVVDQQNAGDPAYRPMAGNFANSCAFKAASDLIFLGVKQPNGYTEPLLHAWRLREKESH</sequence>
<evidence type="ECO:0000250" key="1"/>
<evidence type="ECO:0000255" key="2">
    <source>
        <dbReference type="HAMAP-Rule" id="MF_00641"/>
    </source>
</evidence>
<gene>
    <name evidence="2" type="primary">glcB</name>
    <name type="ordered locus">SF3015</name>
    <name type="ordered locus">S3216</name>
</gene>
<proteinExistence type="inferred from homology"/>
<organism>
    <name type="scientific">Shigella flexneri</name>
    <dbReference type="NCBI Taxonomy" id="623"/>
    <lineage>
        <taxon>Bacteria</taxon>
        <taxon>Pseudomonadati</taxon>
        <taxon>Pseudomonadota</taxon>
        <taxon>Gammaproteobacteria</taxon>
        <taxon>Enterobacterales</taxon>
        <taxon>Enterobacteriaceae</taxon>
        <taxon>Shigella</taxon>
    </lineage>
</organism>
<name>MASZ_SHIFL</name>
<protein>
    <recommendedName>
        <fullName evidence="2">Malate synthase G</fullName>
        <ecNumber evidence="2">2.3.3.9</ecNumber>
    </recommendedName>
</protein>